<organism>
    <name type="scientific">Actinobacillus pleuropneumoniae serotype 5b (strain L20)</name>
    <dbReference type="NCBI Taxonomy" id="416269"/>
    <lineage>
        <taxon>Bacteria</taxon>
        <taxon>Pseudomonadati</taxon>
        <taxon>Pseudomonadota</taxon>
        <taxon>Gammaproteobacteria</taxon>
        <taxon>Pasteurellales</taxon>
        <taxon>Pasteurellaceae</taxon>
        <taxon>Actinobacillus</taxon>
    </lineage>
</organism>
<evidence type="ECO:0000255" key="1">
    <source>
        <dbReference type="HAMAP-Rule" id="MF_00592"/>
    </source>
</evidence>
<accession>A3N123</accession>
<feature type="chain" id="PRO_1000072591" description="Deoxyribose-phosphate aldolase">
    <location>
        <begin position="1"/>
        <end position="258"/>
    </location>
</feature>
<feature type="active site" description="Proton donor/acceptor" evidence="1">
    <location>
        <position position="101"/>
    </location>
</feature>
<feature type="active site" description="Schiff-base intermediate with acetaldehyde" evidence="1">
    <location>
        <position position="166"/>
    </location>
</feature>
<feature type="active site" description="Proton donor/acceptor" evidence="1">
    <location>
        <position position="200"/>
    </location>
</feature>
<name>DEOC_ACTP2</name>
<proteinExistence type="inferred from homology"/>
<dbReference type="EC" id="4.1.2.4" evidence="1"/>
<dbReference type="EMBL" id="CP000569">
    <property type="protein sequence ID" value="ABN74109.1"/>
    <property type="molecule type" value="Genomic_DNA"/>
</dbReference>
<dbReference type="RefSeq" id="WP_009874823.1">
    <property type="nucleotide sequence ID" value="NC_009053.1"/>
</dbReference>
<dbReference type="SMR" id="A3N123"/>
<dbReference type="STRING" id="416269.APL_1015"/>
<dbReference type="EnsemblBacteria" id="ABN74109">
    <property type="protein sequence ID" value="ABN74109"/>
    <property type="gene ID" value="APL_1015"/>
</dbReference>
<dbReference type="KEGG" id="apl:APL_1015"/>
<dbReference type="PATRIC" id="fig|416269.6.peg.1062"/>
<dbReference type="eggNOG" id="COG0274">
    <property type="taxonomic scope" value="Bacteria"/>
</dbReference>
<dbReference type="HOGENOM" id="CLU_053595_3_1_6"/>
<dbReference type="UniPathway" id="UPA00002">
    <property type="reaction ID" value="UER00468"/>
</dbReference>
<dbReference type="Proteomes" id="UP000001432">
    <property type="component" value="Chromosome"/>
</dbReference>
<dbReference type="GO" id="GO:0005737">
    <property type="term" value="C:cytoplasm"/>
    <property type="evidence" value="ECO:0007669"/>
    <property type="project" value="UniProtKB-SubCell"/>
</dbReference>
<dbReference type="GO" id="GO:0004139">
    <property type="term" value="F:deoxyribose-phosphate aldolase activity"/>
    <property type="evidence" value="ECO:0007669"/>
    <property type="project" value="UniProtKB-UniRule"/>
</dbReference>
<dbReference type="GO" id="GO:0006018">
    <property type="term" value="P:2-deoxyribose 1-phosphate catabolic process"/>
    <property type="evidence" value="ECO:0007669"/>
    <property type="project" value="UniProtKB-UniRule"/>
</dbReference>
<dbReference type="GO" id="GO:0016052">
    <property type="term" value="P:carbohydrate catabolic process"/>
    <property type="evidence" value="ECO:0007669"/>
    <property type="project" value="TreeGrafter"/>
</dbReference>
<dbReference type="GO" id="GO:0009264">
    <property type="term" value="P:deoxyribonucleotide catabolic process"/>
    <property type="evidence" value="ECO:0007669"/>
    <property type="project" value="InterPro"/>
</dbReference>
<dbReference type="CDD" id="cd00959">
    <property type="entry name" value="DeoC"/>
    <property type="match status" value="1"/>
</dbReference>
<dbReference type="Gene3D" id="3.20.20.70">
    <property type="entry name" value="Aldolase class I"/>
    <property type="match status" value="1"/>
</dbReference>
<dbReference type="HAMAP" id="MF_00592">
    <property type="entry name" value="DeoC_type2"/>
    <property type="match status" value="1"/>
</dbReference>
<dbReference type="InterPro" id="IPR013785">
    <property type="entry name" value="Aldolase_TIM"/>
</dbReference>
<dbReference type="InterPro" id="IPR011343">
    <property type="entry name" value="DeoC"/>
</dbReference>
<dbReference type="InterPro" id="IPR002915">
    <property type="entry name" value="DeoC/FbaB/LacD_aldolase"/>
</dbReference>
<dbReference type="InterPro" id="IPR023649">
    <property type="entry name" value="DeoC_typeII"/>
</dbReference>
<dbReference type="NCBIfam" id="TIGR00126">
    <property type="entry name" value="deoC"/>
    <property type="match status" value="1"/>
</dbReference>
<dbReference type="PANTHER" id="PTHR10889">
    <property type="entry name" value="DEOXYRIBOSE-PHOSPHATE ALDOLASE"/>
    <property type="match status" value="1"/>
</dbReference>
<dbReference type="PANTHER" id="PTHR10889:SF3">
    <property type="entry name" value="DEOXYRIBOSE-PHOSPHATE ALDOLASE"/>
    <property type="match status" value="1"/>
</dbReference>
<dbReference type="Pfam" id="PF01791">
    <property type="entry name" value="DeoC"/>
    <property type="match status" value="1"/>
</dbReference>
<dbReference type="PIRSF" id="PIRSF001357">
    <property type="entry name" value="DeoC"/>
    <property type="match status" value="1"/>
</dbReference>
<dbReference type="SMART" id="SM01133">
    <property type="entry name" value="DeoC"/>
    <property type="match status" value="1"/>
</dbReference>
<dbReference type="SUPFAM" id="SSF51569">
    <property type="entry name" value="Aldolase"/>
    <property type="match status" value="1"/>
</dbReference>
<gene>
    <name evidence="1" type="primary">deoC</name>
    <name type="ordered locus">APL_1015</name>
</gene>
<keyword id="KW-0963">Cytoplasm</keyword>
<keyword id="KW-0456">Lyase</keyword>
<keyword id="KW-1185">Reference proteome</keyword>
<keyword id="KW-0704">Schiff base</keyword>
<sequence length="258" mass="27680">MSLKDSAKIALSLMDLTTLNDNDTDEKVITLCQQGKTEFGTPAAVCVYPRFVPIARKALKAQGTEQVKIATVTNFPHGNNDIDIAVAETKAAVAYGADEVDVVFPYKALMAGNEQIGFELVQQCKAVCQASNVLLKVIIETGELKTAELIRKASEISIKAGADFIKTSTGKVPVNATLEYARIMLETIRDLNVADRVGFKAAGGVKTAEEAAQYLALAQEILGHDWVNSDHFRFGASSLLTNLLAALNGQANQKVSGY</sequence>
<reference key="1">
    <citation type="journal article" date="2008" name="J. Bacteriol.">
        <title>The complete genome sequence of Actinobacillus pleuropneumoniae L20 (serotype 5b).</title>
        <authorList>
            <person name="Foote S.J."/>
            <person name="Bosse J.T."/>
            <person name="Bouevitch A.B."/>
            <person name="Langford P.R."/>
            <person name="Young N.M."/>
            <person name="Nash J.H.E."/>
        </authorList>
    </citation>
    <scope>NUCLEOTIDE SEQUENCE [LARGE SCALE GENOMIC DNA]</scope>
    <source>
        <strain>L20</strain>
    </source>
</reference>
<comment type="function">
    <text evidence="1">Catalyzes a reversible aldol reaction between acetaldehyde and D-glyceraldehyde 3-phosphate to generate 2-deoxy-D-ribose 5-phosphate.</text>
</comment>
<comment type="catalytic activity">
    <reaction evidence="1">
        <text>2-deoxy-D-ribose 5-phosphate = D-glyceraldehyde 3-phosphate + acetaldehyde</text>
        <dbReference type="Rhea" id="RHEA:12821"/>
        <dbReference type="ChEBI" id="CHEBI:15343"/>
        <dbReference type="ChEBI" id="CHEBI:59776"/>
        <dbReference type="ChEBI" id="CHEBI:62877"/>
        <dbReference type="EC" id="4.1.2.4"/>
    </reaction>
</comment>
<comment type="pathway">
    <text evidence="1">Carbohydrate degradation; 2-deoxy-D-ribose 1-phosphate degradation; D-glyceraldehyde 3-phosphate and acetaldehyde from 2-deoxy-alpha-D-ribose 1-phosphate: step 2/2.</text>
</comment>
<comment type="subcellular location">
    <subcellularLocation>
        <location evidence="1">Cytoplasm</location>
    </subcellularLocation>
</comment>
<comment type="similarity">
    <text evidence="1">Belongs to the DeoC/FbaB aldolase family. DeoC type 2 subfamily.</text>
</comment>
<protein>
    <recommendedName>
        <fullName evidence="1">Deoxyribose-phosphate aldolase</fullName>
        <shortName evidence="1">DERA</shortName>
        <ecNumber evidence="1">4.1.2.4</ecNumber>
    </recommendedName>
    <alternativeName>
        <fullName evidence="1">2-deoxy-D-ribose 5-phosphate aldolase</fullName>
    </alternativeName>
    <alternativeName>
        <fullName evidence="1">Phosphodeoxyriboaldolase</fullName>
        <shortName evidence="1">Deoxyriboaldolase</shortName>
    </alternativeName>
</protein>